<comment type="subcellular location">
    <subcellularLocation>
        <location evidence="1">Secreted</location>
    </subcellularLocation>
</comment>
<comment type="tissue specificity">
    <text>Expressed by the venom duct.</text>
</comment>
<comment type="domain">
    <text evidence="1">The presence of a 'disulfide through disulfide knot' structurally defines this protein as a knottin.</text>
</comment>
<comment type="domain">
    <text>The cysteine framework is VI/VII (C-C-CC-C-C).</text>
</comment>
<comment type="similarity">
    <text evidence="3">Belongs to the conotoxin O2 superfamily.</text>
</comment>
<sequence length="74" mass="8553">MEKLTILLLVAAVLMWTQALIQEKRPKEKIKFLSKRKTTAESWWEGECSGWSVYCTQHSECCSGECTGNYCELF</sequence>
<dbReference type="EMBL" id="AF215004">
    <property type="protein sequence ID" value="AAG60432.1"/>
    <property type="molecule type" value="mRNA"/>
</dbReference>
<dbReference type="SMR" id="Q9BPD0"/>
<dbReference type="ConoServer" id="691">
    <property type="toxin name" value="Vn6.1 precursor"/>
</dbReference>
<dbReference type="GO" id="GO:0005576">
    <property type="term" value="C:extracellular region"/>
    <property type="evidence" value="ECO:0007669"/>
    <property type="project" value="UniProtKB-SubCell"/>
</dbReference>
<dbReference type="GO" id="GO:0008200">
    <property type="term" value="F:ion channel inhibitor activity"/>
    <property type="evidence" value="ECO:0007669"/>
    <property type="project" value="InterPro"/>
</dbReference>
<dbReference type="GO" id="GO:0090729">
    <property type="term" value="F:toxin activity"/>
    <property type="evidence" value="ECO:0007669"/>
    <property type="project" value="UniProtKB-KW"/>
</dbReference>
<dbReference type="InterPro" id="IPR004214">
    <property type="entry name" value="Conotoxin"/>
</dbReference>
<dbReference type="Pfam" id="PF02950">
    <property type="entry name" value="Conotoxin"/>
    <property type="match status" value="1"/>
</dbReference>
<proteinExistence type="evidence at transcript level"/>
<reference key="1">
    <citation type="journal article" date="2001" name="Mol. Biol. Evol.">
        <title>Mechanisms for evolving hypervariability: the case of conopeptides.</title>
        <authorList>
            <person name="Conticello S.G."/>
            <person name="Gilad Y."/>
            <person name="Avidan N."/>
            <person name="Ben-Asher E."/>
            <person name="Levy Z."/>
            <person name="Fainzilber M."/>
        </authorList>
    </citation>
    <scope>NUCLEOTIDE SEQUENCE [MRNA]</scope>
    <source>
        <tissue>Venom duct</tissue>
    </source>
</reference>
<protein>
    <recommendedName>
        <fullName>Conotoxin VnMEKL-0221</fullName>
    </recommendedName>
</protein>
<evidence type="ECO:0000250" key="1"/>
<evidence type="ECO:0000255" key="2"/>
<evidence type="ECO:0000305" key="3"/>
<organism>
    <name type="scientific">Conus ventricosus</name>
    <name type="common">Mediterranean cone</name>
    <dbReference type="NCBI Taxonomy" id="117992"/>
    <lineage>
        <taxon>Eukaryota</taxon>
        <taxon>Metazoa</taxon>
        <taxon>Spiralia</taxon>
        <taxon>Lophotrochozoa</taxon>
        <taxon>Mollusca</taxon>
        <taxon>Gastropoda</taxon>
        <taxon>Caenogastropoda</taxon>
        <taxon>Neogastropoda</taxon>
        <taxon>Conoidea</taxon>
        <taxon>Conidae</taxon>
        <taxon>Conus</taxon>
        <taxon>Lautoconus</taxon>
    </lineage>
</organism>
<feature type="signal peptide" evidence="2">
    <location>
        <begin position="1"/>
        <end position="19"/>
    </location>
</feature>
<feature type="propeptide" id="PRO_0000404802" evidence="1">
    <location>
        <begin position="20"/>
        <end position="46"/>
    </location>
</feature>
<feature type="peptide" id="PRO_0000404803" description="Conotoxin VnMEKL-0221">
    <location>
        <begin position="47"/>
        <end position="74"/>
    </location>
</feature>
<feature type="disulfide bond" evidence="1">
    <location>
        <begin position="48"/>
        <end position="62"/>
    </location>
</feature>
<feature type="disulfide bond" evidence="1">
    <location>
        <begin position="55"/>
        <end position="66"/>
    </location>
</feature>
<feature type="disulfide bond" evidence="1">
    <location>
        <begin position="61"/>
        <end position="71"/>
    </location>
</feature>
<keyword id="KW-1015">Disulfide bond</keyword>
<keyword id="KW-0960">Knottin</keyword>
<keyword id="KW-0528">Neurotoxin</keyword>
<keyword id="KW-0964">Secreted</keyword>
<keyword id="KW-0732">Signal</keyword>
<keyword id="KW-0800">Toxin</keyword>
<name>O261_CONVE</name>
<accession>Q9BPD0</accession>